<gene>
    <name evidence="4" type="primary">IAN6</name>
    <name evidence="7" type="ordered locus">At1g33930</name>
    <name evidence="8" type="ORF">T3M13.5</name>
</gene>
<name>IAN6_ARATH</name>
<reference key="1">
    <citation type="journal article" date="2000" name="Nature">
        <title>Sequence and analysis of chromosome 1 of the plant Arabidopsis thaliana.</title>
        <authorList>
            <person name="Theologis A."/>
            <person name="Ecker J.R."/>
            <person name="Palm C.J."/>
            <person name="Federspiel N.A."/>
            <person name="Kaul S."/>
            <person name="White O."/>
            <person name="Alonso J."/>
            <person name="Altafi H."/>
            <person name="Araujo R."/>
            <person name="Bowman C.L."/>
            <person name="Brooks S.Y."/>
            <person name="Buehler E."/>
            <person name="Chan A."/>
            <person name="Chao Q."/>
            <person name="Chen H."/>
            <person name="Cheuk R.F."/>
            <person name="Chin C.W."/>
            <person name="Chung M.K."/>
            <person name="Conn L."/>
            <person name="Conway A.B."/>
            <person name="Conway A.R."/>
            <person name="Creasy T.H."/>
            <person name="Dewar K."/>
            <person name="Dunn P."/>
            <person name="Etgu P."/>
            <person name="Feldblyum T.V."/>
            <person name="Feng J.-D."/>
            <person name="Fong B."/>
            <person name="Fujii C.Y."/>
            <person name="Gill J.E."/>
            <person name="Goldsmith A.D."/>
            <person name="Haas B."/>
            <person name="Hansen N.F."/>
            <person name="Hughes B."/>
            <person name="Huizar L."/>
            <person name="Hunter J.L."/>
            <person name="Jenkins J."/>
            <person name="Johnson-Hopson C."/>
            <person name="Khan S."/>
            <person name="Khaykin E."/>
            <person name="Kim C.J."/>
            <person name="Koo H.L."/>
            <person name="Kremenetskaia I."/>
            <person name="Kurtz D.B."/>
            <person name="Kwan A."/>
            <person name="Lam B."/>
            <person name="Langin-Hooper S."/>
            <person name="Lee A."/>
            <person name="Lee J.M."/>
            <person name="Lenz C.A."/>
            <person name="Li J.H."/>
            <person name="Li Y.-P."/>
            <person name="Lin X."/>
            <person name="Liu S.X."/>
            <person name="Liu Z.A."/>
            <person name="Luros J.S."/>
            <person name="Maiti R."/>
            <person name="Marziali A."/>
            <person name="Militscher J."/>
            <person name="Miranda M."/>
            <person name="Nguyen M."/>
            <person name="Nierman W.C."/>
            <person name="Osborne B.I."/>
            <person name="Pai G."/>
            <person name="Peterson J."/>
            <person name="Pham P.K."/>
            <person name="Rizzo M."/>
            <person name="Rooney T."/>
            <person name="Rowley D."/>
            <person name="Sakano H."/>
            <person name="Salzberg S.L."/>
            <person name="Schwartz J.R."/>
            <person name="Shinn P."/>
            <person name="Southwick A.M."/>
            <person name="Sun H."/>
            <person name="Tallon L.J."/>
            <person name="Tambunga G."/>
            <person name="Toriumi M.J."/>
            <person name="Town C.D."/>
            <person name="Utterback T."/>
            <person name="Van Aken S."/>
            <person name="Vaysberg M."/>
            <person name="Vysotskaia V.S."/>
            <person name="Walker M."/>
            <person name="Wu D."/>
            <person name="Yu G."/>
            <person name="Fraser C.M."/>
            <person name="Venter J.C."/>
            <person name="Davis R.W."/>
        </authorList>
    </citation>
    <scope>NUCLEOTIDE SEQUENCE [LARGE SCALE GENOMIC DNA]</scope>
    <source>
        <strain>cv. Columbia</strain>
    </source>
</reference>
<reference key="2">
    <citation type="journal article" date="2017" name="Plant J.">
        <title>Araport11: a complete reannotation of the Arabidopsis thaliana reference genome.</title>
        <authorList>
            <person name="Cheng C.Y."/>
            <person name="Krishnakumar V."/>
            <person name="Chan A.P."/>
            <person name="Thibaud-Nissen F."/>
            <person name="Schobel S."/>
            <person name="Town C.D."/>
        </authorList>
    </citation>
    <scope>GENOME REANNOTATION</scope>
    <source>
        <strain>cv. Columbia</strain>
    </source>
</reference>
<reference key="3">
    <citation type="journal article" date="2006" name="Plant Biotechnol. J.">
        <title>Simultaneous high-throughput recombinational cloning of open reading frames in closed and open configurations.</title>
        <authorList>
            <person name="Underwood B.A."/>
            <person name="Vanderhaeghen R."/>
            <person name="Whitford R."/>
            <person name="Town C.D."/>
            <person name="Hilson P."/>
        </authorList>
    </citation>
    <scope>NUCLEOTIDE SEQUENCE [LARGE SCALE MRNA]</scope>
    <source>
        <strain>cv. Columbia</strain>
    </source>
</reference>
<reference key="4">
    <citation type="journal article" date="2008" name="J. Plant Physiol.">
        <title>Computational identification and analysis of immune-associated nucleotide gene family in Arabidopsis thaliana.</title>
        <authorList>
            <person name="Liu C."/>
            <person name="Wang T."/>
            <person name="Zhang W."/>
            <person name="Li X."/>
        </authorList>
    </citation>
    <scope>GENE FAMILY</scope>
    <scope>NOMENCLATURE</scope>
</reference>
<accession>Q9C8V0</accession>
<accession>A0MEA7</accession>
<proteinExistence type="evidence at transcript level"/>
<sequence>MAEDQNTTDRWELPSASEPVKNVDRWELPSASEPVKNVVLVGRTGNGKSATGNSIIGRKVFESKYQAVGVTTRCKTFRAVTPDGPIINVIDTPGLFDLAVSAEFISKEIVNCLILAREGLHAVVLVLSLSTRISQEEENALCTLQMLFGGKIVDYLIVVFTCGDMLEDRNMTLEDYLSNGCPEFLKNVLRLCGGRRVVFDNRTKDEGVKAKQVQQLLVHVAAIEKETGGNPFTDTMHRRIQEEAARVKREEKEIEEKNIADEEKAALKKQLDMSYSQNMNMMALMMERIFKETAAANERQMNMMKDFMEISIIGNDAHRKRAEEKQAEKKQECNIL</sequence>
<dbReference type="EMBL" id="AC022288">
    <property type="protein sequence ID" value="AAG52203.1"/>
    <property type="molecule type" value="Genomic_DNA"/>
</dbReference>
<dbReference type="EMBL" id="CP002684">
    <property type="protein sequence ID" value="AEE31642.1"/>
    <property type="molecule type" value="Genomic_DNA"/>
</dbReference>
<dbReference type="EMBL" id="DQ446318">
    <property type="protein sequence ID" value="ABE65682.1"/>
    <property type="molecule type" value="mRNA"/>
</dbReference>
<dbReference type="EMBL" id="DQ652876">
    <property type="protein sequence ID" value="ABK28429.1"/>
    <property type="status" value="ALT_SEQ"/>
    <property type="molecule type" value="mRNA"/>
</dbReference>
<dbReference type="PIR" id="B86463">
    <property type="entry name" value="B86463"/>
</dbReference>
<dbReference type="RefSeq" id="NP_001319141.1">
    <property type="nucleotide sequence ID" value="NM_001333072.1"/>
</dbReference>
<dbReference type="SMR" id="Q9C8V0"/>
<dbReference type="FunCoup" id="Q9C8V0">
    <property type="interactions" value="49"/>
</dbReference>
<dbReference type="STRING" id="3702.Q9C8V0"/>
<dbReference type="PaxDb" id="3702-AT1G33930.1"/>
<dbReference type="EnsemblPlants" id="AT1G33930.1">
    <property type="protein sequence ID" value="AT1G33930.1"/>
    <property type="gene ID" value="AT1G33930"/>
</dbReference>
<dbReference type="GeneID" id="840290"/>
<dbReference type="Gramene" id="AT1G33930.1">
    <property type="protein sequence ID" value="AT1G33930.1"/>
    <property type="gene ID" value="AT1G33930"/>
</dbReference>
<dbReference type="KEGG" id="ath:AT1G33930"/>
<dbReference type="Araport" id="AT1G33930"/>
<dbReference type="TAIR" id="AT1G33930">
    <property type="gene designation" value="IAN6"/>
</dbReference>
<dbReference type="eggNOG" id="ENOG502R7PE">
    <property type="taxonomic scope" value="Eukaryota"/>
</dbReference>
<dbReference type="HOGENOM" id="CLU_010468_0_1_1"/>
<dbReference type="InParanoid" id="Q9C8V0"/>
<dbReference type="OMA" id="DRWELPS"/>
<dbReference type="PhylomeDB" id="Q9C8V0"/>
<dbReference type="PRO" id="PR:Q9C8V0"/>
<dbReference type="Proteomes" id="UP000006548">
    <property type="component" value="Chromosome 1"/>
</dbReference>
<dbReference type="ExpressionAtlas" id="Q9C8V0">
    <property type="expression patterns" value="baseline and differential"/>
</dbReference>
<dbReference type="GO" id="GO:0005783">
    <property type="term" value="C:endoplasmic reticulum"/>
    <property type="evidence" value="ECO:0000314"/>
    <property type="project" value="TAIR"/>
</dbReference>
<dbReference type="GO" id="GO:0005886">
    <property type="term" value="C:plasma membrane"/>
    <property type="evidence" value="ECO:0000314"/>
    <property type="project" value="TAIR"/>
</dbReference>
<dbReference type="GO" id="GO:0005525">
    <property type="term" value="F:GTP binding"/>
    <property type="evidence" value="ECO:0007669"/>
    <property type="project" value="UniProtKB-KW"/>
</dbReference>
<dbReference type="GO" id="GO:0034605">
    <property type="term" value="P:cellular response to heat"/>
    <property type="evidence" value="ECO:0000316"/>
    <property type="project" value="TAIR"/>
</dbReference>
<dbReference type="GO" id="GO:0030968">
    <property type="term" value="P:endoplasmic reticulum unfolded protein response"/>
    <property type="evidence" value="ECO:0000316"/>
    <property type="project" value="TAIR"/>
</dbReference>
<dbReference type="CDD" id="cd01852">
    <property type="entry name" value="AIG1"/>
    <property type="match status" value="1"/>
</dbReference>
<dbReference type="FunFam" id="3.40.50.300:FF:000840">
    <property type="entry name" value="Immune-associated nucleotide-binding protein 9"/>
    <property type="match status" value="1"/>
</dbReference>
<dbReference type="Gene3D" id="3.40.50.300">
    <property type="entry name" value="P-loop containing nucleotide triphosphate hydrolases"/>
    <property type="match status" value="1"/>
</dbReference>
<dbReference type="InterPro" id="IPR006703">
    <property type="entry name" value="G_AIG1"/>
</dbReference>
<dbReference type="InterPro" id="IPR045058">
    <property type="entry name" value="GIMA/IAN/Toc"/>
</dbReference>
<dbReference type="InterPro" id="IPR027417">
    <property type="entry name" value="P-loop_NTPase"/>
</dbReference>
<dbReference type="PANTHER" id="PTHR10903:SF146">
    <property type="entry name" value="AIG1-LIKE PROTEIN_ 48352-49494-RELATED"/>
    <property type="match status" value="1"/>
</dbReference>
<dbReference type="PANTHER" id="PTHR10903">
    <property type="entry name" value="GTPASE, IMAP FAMILY MEMBER-RELATED"/>
    <property type="match status" value="1"/>
</dbReference>
<dbReference type="Pfam" id="PF04548">
    <property type="entry name" value="AIG1"/>
    <property type="match status" value="1"/>
</dbReference>
<dbReference type="SUPFAM" id="SSF52540">
    <property type="entry name" value="P-loop containing nucleoside triphosphate hydrolases"/>
    <property type="match status" value="1"/>
</dbReference>
<dbReference type="PROSITE" id="PS51720">
    <property type="entry name" value="G_AIG1"/>
    <property type="match status" value="1"/>
</dbReference>
<organism>
    <name type="scientific">Arabidopsis thaliana</name>
    <name type="common">Mouse-ear cress</name>
    <dbReference type="NCBI Taxonomy" id="3702"/>
    <lineage>
        <taxon>Eukaryota</taxon>
        <taxon>Viridiplantae</taxon>
        <taxon>Streptophyta</taxon>
        <taxon>Embryophyta</taxon>
        <taxon>Tracheophyta</taxon>
        <taxon>Spermatophyta</taxon>
        <taxon>Magnoliopsida</taxon>
        <taxon>eudicotyledons</taxon>
        <taxon>Gunneridae</taxon>
        <taxon>Pentapetalae</taxon>
        <taxon>rosids</taxon>
        <taxon>malvids</taxon>
        <taxon>Brassicales</taxon>
        <taxon>Brassicaceae</taxon>
        <taxon>Camelineae</taxon>
        <taxon>Arabidopsis</taxon>
    </lineage>
</organism>
<keyword id="KW-0175">Coiled coil</keyword>
<keyword id="KW-0342">GTP-binding</keyword>
<keyword id="KW-0547">Nucleotide-binding</keyword>
<keyword id="KW-1185">Reference proteome</keyword>
<evidence type="ECO:0000250" key="1">
    <source>
        <dbReference type="UniProtKB" id="Q8NHV1"/>
    </source>
</evidence>
<evidence type="ECO:0000255" key="2"/>
<evidence type="ECO:0000255" key="3">
    <source>
        <dbReference type="PROSITE-ProRule" id="PRU01057"/>
    </source>
</evidence>
<evidence type="ECO:0000303" key="4">
    <source>
    </source>
</evidence>
<evidence type="ECO:0000305" key="5"/>
<evidence type="ECO:0000305" key="6">
    <source>
    </source>
</evidence>
<evidence type="ECO:0000312" key="7">
    <source>
        <dbReference type="Araport" id="AT1G33930"/>
    </source>
</evidence>
<evidence type="ECO:0000312" key="8">
    <source>
        <dbReference type="EMBL" id="AAG52203.1"/>
    </source>
</evidence>
<feature type="chain" id="PRO_0000438030" description="Immune-associated nucleotide-binding protein 6">
    <location>
        <begin position="1"/>
        <end position="336"/>
    </location>
</feature>
<feature type="domain" description="AIG1-type G" evidence="3">
    <location>
        <begin position="33"/>
        <end position="241"/>
    </location>
</feature>
<feature type="region of interest" description="G1" evidence="3">
    <location>
        <begin position="42"/>
        <end position="49"/>
    </location>
</feature>
<feature type="region of interest" description="G2" evidence="3">
    <location>
        <begin position="69"/>
        <end position="73"/>
    </location>
</feature>
<feature type="region of interest" description="G3" evidence="3">
    <location>
        <begin position="91"/>
        <end position="94"/>
    </location>
</feature>
<feature type="region of interest" description="G4" evidence="3">
    <location>
        <begin position="161"/>
        <end position="164"/>
    </location>
</feature>
<feature type="region of interest" description="G5" evidence="3">
    <location>
        <begin position="200"/>
        <end position="202"/>
    </location>
</feature>
<feature type="coiled-coil region" evidence="2">
    <location>
        <begin position="237"/>
        <end position="270"/>
    </location>
</feature>
<feature type="binding site" evidence="1">
    <location>
        <begin position="42"/>
        <end position="50"/>
    </location>
    <ligand>
        <name>GTP</name>
        <dbReference type="ChEBI" id="CHEBI:37565"/>
    </ligand>
</feature>
<feature type="binding site" evidence="1">
    <location>
        <position position="63"/>
    </location>
    <ligand>
        <name>GTP</name>
        <dbReference type="ChEBI" id="CHEBI:37565"/>
    </ligand>
</feature>
<feature type="binding site" evidence="1">
    <location>
        <position position="201"/>
    </location>
    <ligand>
        <name>GTP</name>
        <dbReference type="ChEBI" id="CHEBI:37565"/>
    </ligand>
</feature>
<protein>
    <recommendedName>
        <fullName evidence="4">Immune-associated nucleotide-binding protein 6</fullName>
        <shortName evidence="4">AtIAN6</shortName>
    </recommendedName>
    <alternativeName>
        <fullName evidence="5">AIG1-like protein</fullName>
    </alternativeName>
</protein>
<comment type="tissue specificity">
    <text evidence="6">Mostly expressed in pollen. Also detected in lateral roots and radicles.</text>
</comment>
<comment type="induction">
    <text evidence="6">Up-regulated by brassinolides. Down-regulated by 2-aminoethoxyvinylglycine (AVG), high CO(2), isoxaben, and propiconazole treatments.</text>
</comment>
<comment type="similarity">
    <text evidence="5">Belongs to the TRAFAC class TrmE-Era-EngA-EngB-Septin-like GTPase superfamily. AIG1/Toc34/Toc159-like paraseptin GTPase family. IAN subfamily.</text>
</comment>
<comment type="sequence caution" evidence="5">
    <conflict type="erroneous termination">
        <sequence resource="EMBL-CDS" id="ABK28429"/>
    </conflict>
    <text>Extended C-terminus.</text>
</comment>